<protein>
    <recommendedName>
        <fullName evidence="1">Bifunctional protein PyrR</fullName>
    </recommendedName>
    <domain>
        <recommendedName>
            <fullName evidence="1">Pyrimidine operon regulatory protein</fullName>
        </recommendedName>
    </domain>
    <domain>
        <recommendedName>
            <fullName evidence="1">Uracil phosphoribosyltransferase</fullName>
            <shortName evidence="1">UPRTase</shortName>
            <ecNumber evidence="1">2.4.2.9</ecNumber>
        </recommendedName>
    </domain>
</protein>
<organism>
    <name type="scientific">Streptococcus suis (strain 05ZYH33)</name>
    <dbReference type="NCBI Taxonomy" id="391295"/>
    <lineage>
        <taxon>Bacteria</taxon>
        <taxon>Bacillati</taxon>
        <taxon>Bacillota</taxon>
        <taxon>Bacilli</taxon>
        <taxon>Lactobacillales</taxon>
        <taxon>Streptococcaceae</taxon>
        <taxon>Streptococcus</taxon>
    </lineage>
</organism>
<dbReference type="EC" id="2.4.2.9" evidence="1"/>
<dbReference type="EMBL" id="CP000407">
    <property type="protein sequence ID" value="ABP89755.1"/>
    <property type="molecule type" value="Genomic_DNA"/>
</dbReference>
<dbReference type="SMR" id="A4VUG6"/>
<dbReference type="STRING" id="391295.SSU05_0789"/>
<dbReference type="KEGG" id="ssu:SSU05_0789"/>
<dbReference type="eggNOG" id="COG2065">
    <property type="taxonomic scope" value="Bacteria"/>
</dbReference>
<dbReference type="HOGENOM" id="CLU_094234_2_1_9"/>
<dbReference type="GO" id="GO:0003723">
    <property type="term" value="F:RNA binding"/>
    <property type="evidence" value="ECO:0007669"/>
    <property type="project" value="UniProtKB-UniRule"/>
</dbReference>
<dbReference type="GO" id="GO:0004845">
    <property type="term" value="F:uracil phosphoribosyltransferase activity"/>
    <property type="evidence" value="ECO:0007669"/>
    <property type="project" value="UniProtKB-UniRule"/>
</dbReference>
<dbReference type="GO" id="GO:0006353">
    <property type="term" value="P:DNA-templated transcription termination"/>
    <property type="evidence" value="ECO:0007669"/>
    <property type="project" value="UniProtKB-UniRule"/>
</dbReference>
<dbReference type="CDD" id="cd06223">
    <property type="entry name" value="PRTases_typeI"/>
    <property type="match status" value="1"/>
</dbReference>
<dbReference type="FunFam" id="3.40.50.2020:FF:000020">
    <property type="entry name" value="Bifunctional protein PyrR"/>
    <property type="match status" value="1"/>
</dbReference>
<dbReference type="Gene3D" id="3.40.50.2020">
    <property type="match status" value="1"/>
</dbReference>
<dbReference type="HAMAP" id="MF_01219">
    <property type="entry name" value="PyrR"/>
    <property type="match status" value="1"/>
</dbReference>
<dbReference type="InterPro" id="IPR000836">
    <property type="entry name" value="PRibTrfase_dom"/>
</dbReference>
<dbReference type="InterPro" id="IPR029057">
    <property type="entry name" value="PRTase-like"/>
</dbReference>
<dbReference type="InterPro" id="IPR023050">
    <property type="entry name" value="PyrR"/>
</dbReference>
<dbReference type="InterPro" id="IPR050137">
    <property type="entry name" value="PyrR_bifunctional"/>
</dbReference>
<dbReference type="NCBIfam" id="NF003548">
    <property type="entry name" value="PRK05205.1-4"/>
    <property type="match status" value="1"/>
</dbReference>
<dbReference type="NCBIfam" id="NF003549">
    <property type="entry name" value="PRK05205.1-5"/>
    <property type="match status" value="1"/>
</dbReference>
<dbReference type="PANTHER" id="PTHR11608">
    <property type="entry name" value="BIFUNCTIONAL PROTEIN PYRR"/>
    <property type="match status" value="1"/>
</dbReference>
<dbReference type="PANTHER" id="PTHR11608:SF0">
    <property type="entry name" value="BIFUNCTIONAL PROTEIN PYRR"/>
    <property type="match status" value="1"/>
</dbReference>
<dbReference type="Pfam" id="PF00156">
    <property type="entry name" value="Pribosyltran"/>
    <property type="match status" value="1"/>
</dbReference>
<dbReference type="SUPFAM" id="SSF53271">
    <property type="entry name" value="PRTase-like"/>
    <property type="match status" value="1"/>
</dbReference>
<evidence type="ECO:0000255" key="1">
    <source>
        <dbReference type="HAMAP-Rule" id="MF_01219"/>
    </source>
</evidence>
<name>PYRR_STRSY</name>
<proteinExistence type="inferred from homology"/>
<reference key="1">
    <citation type="journal article" date="2007" name="PLoS ONE">
        <title>A glimpse of streptococcal toxic shock syndrome from comparative genomics of S. suis 2 Chinese isolates.</title>
        <authorList>
            <person name="Chen C."/>
            <person name="Tang J."/>
            <person name="Dong W."/>
            <person name="Wang C."/>
            <person name="Feng Y."/>
            <person name="Wang J."/>
            <person name="Zheng F."/>
            <person name="Pan X."/>
            <person name="Liu D."/>
            <person name="Li M."/>
            <person name="Song Y."/>
            <person name="Zhu X."/>
            <person name="Sun H."/>
            <person name="Feng T."/>
            <person name="Guo Z."/>
            <person name="Ju A."/>
            <person name="Ge J."/>
            <person name="Dong Y."/>
            <person name="Sun W."/>
            <person name="Jiang Y."/>
            <person name="Wang J."/>
            <person name="Yan J."/>
            <person name="Yang H."/>
            <person name="Wang X."/>
            <person name="Gao G.F."/>
            <person name="Yang R."/>
            <person name="Wang J."/>
            <person name="Yu J."/>
        </authorList>
    </citation>
    <scope>NUCLEOTIDE SEQUENCE [LARGE SCALE GENOMIC DNA]</scope>
    <source>
        <strain>05ZYH33</strain>
    </source>
</reference>
<sequence length="173" mass="19452">MKTKEIVDDMTMKRAITRITYEIIERNKNLDNIVLAGIKTRGVFIAKRIQERLKQLEGIDVPLGELDTKPFRDDMKVEDDTTNMTANVNDRDVILVDDVLYTGRTIRAAIDNIVSLGRPARVSLAVLVDRGHRELPIRADYVGKNIPTSRSEEIIVHMAEIDGQDAVLLVEGA</sequence>
<feature type="chain" id="PRO_1000053877" description="Bifunctional protein PyrR">
    <location>
        <begin position="1"/>
        <end position="173"/>
    </location>
</feature>
<feature type="short sequence motif" description="PRPP-binding" evidence="1">
    <location>
        <begin position="93"/>
        <end position="105"/>
    </location>
</feature>
<gene>
    <name evidence="1" type="primary">pyrR</name>
    <name type="ordered locus">SSU05_0789</name>
</gene>
<keyword id="KW-0328">Glycosyltransferase</keyword>
<keyword id="KW-0694">RNA-binding</keyword>
<keyword id="KW-0804">Transcription</keyword>
<keyword id="KW-0805">Transcription regulation</keyword>
<keyword id="KW-0806">Transcription termination</keyword>
<keyword id="KW-0808">Transferase</keyword>
<accession>A4VUG6</accession>
<comment type="function">
    <text evidence="1">Regulates transcriptional attenuation of the pyrimidine nucleotide (pyr) operon by binding in a uridine-dependent manner to specific sites on pyr mRNA. This disrupts an antiterminator hairpin in the RNA and favors formation of a downstream transcription terminator, leading to a reduced expression of downstream genes.</text>
</comment>
<comment type="function">
    <text evidence="1">Also displays a weak uracil phosphoribosyltransferase activity which is not physiologically significant.</text>
</comment>
<comment type="catalytic activity">
    <reaction evidence="1">
        <text>UMP + diphosphate = 5-phospho-alpha-D-ribose 1-diphosphate + uracil</text>
        <dbReference type="Rhea" id="RHEA:13017"/>
        <dbReference type="ChEBI" id="CHEBI:17568"/>
        <dbReference type="ChEBI" id="CHEBI:33019"/>
        <dbReference type="ChEBI" id="CHEBI:57865"/>
        <dbReference type="ChEBI" id="CHEBI:58017"/>
        <dbReference type="EC" id="2.4.2.9"/>
    </reaction>
</comment>
<comment type="subunit">
    <text evidence="1">Homodimer and homohexamer; in equilibrium.</text>
</comment>
<comment type="similarity">
    <text evidence="1">Belongs to the purine/pyrimidine phosphoribosyltransferase family. PyrR subfamily.</text>
</comment>